<protein>
    <recommendedName>
        <fullName evidence="1">Phosphoribosyl-AMP cyclohydrolase</fullName>
        <shortName evidence="1">PRA-CH</shortName>
        <ecNumber evidence="1">3.5.4.19</ecNumber>
    </recommendedName>
</protein>
<keyword id="KW-0028">Amino-acid biosynthesis</keyword>
<keyword id="KW-0963">Cytoplasm</keyword>
<keyword id="KW-0368">Histidine biosynthesis</keyword>
<keyword id="KW-0378">Hydrolase</keyword>
<keyword id="KW-0460">Magnesium</keyword>
<keyword id="KW-0479">Metal-binding</keyword>
<keyword id="KW-1185">Reference proteome</keyword>
<keyword id="KW-0862">Zinc</keyword>
<comment type="function">
    <text evidence="1">Catalyzes the hydrolysis of the adenine ring of phosphoribosyl-AMP.</text>
</comment>
<comment type="catalytic activity">
    <reaction evidence="1">
        <text>1-(5-phospho-beta-D-ribosyl)-5'-AMP + H2O = 1-(5-phospho-beta-D-ribosyl)-5-[(5-phospho-beta-D-ribosylamino)methylideneamino]imidazole-4-carboxamide</text>
        <dbReference type="Rhea" id="RHEA:20049"/>
        <dbReference type="ChEBI" id="CHEBI:15377"/>
        <dbReference type="ChEBI" id="CHEBI:58435"/>
        <dbReference type="ChEBI" id="CHEBI:59457"/>
        <dbReference type="EC" id="3.5.4.19"/>
    </reaction>
</comment>
<comment type="cofactor">
    <cofactor evidence="1">
        <name>Mg(2+)</name>
        <dbReference type="ChEBI" id="CHEBI:18420"/>
    </cofactor>
    <text evidence="1">Binds 1 Mg(2+) ion per subunit.</text>
</comment>
<comment type="cofactor">
    <cofactor evidence="1">
        <name>Zn(2+)</name>
        <dbReference type="ChEBI" id="CHEBI:29105"/>
    </cofactor>
    <text evidence="1">Binds 1 zinc ion per subunit.</text>
</comment>
<comment type="pathway">
    <text evidence="1">Amino-acid biosynthesis; L-histidine biosynthesis; L-histidine from 5-phospho-alpha-D-ribose 1-diphosphate: step 3/9.</text>
</comment>
<comment type="subunit">
    <text evidence="1">Homodimer.</text>
</comment>
<comment type="subcellular location">
    <subcellularLocation>
        <location evidence="1">Cytoplasm</location>
    </subcellularLocation>
</comment>
<comment type="similarity">
    <text evidence="1">Belongs to the PRA-CH family.</text>
</comment>
<evidence type="ECO:0000255" key="1">
    <source>
        <dbReference type="HAMAP-Rule" id="MF_01021"/>
    </source>
</evidence>
<name>HIS3_ALKEH</name>
<dbReference type="EC" id="3.5.4.19" evidence="1"/>
<dbReference type="EMBL" id="CP000453">
    <property type="protein sequence ID" value="ABI56550.1"/>
    <property type="molecule type" value="Genomic_DNA"/>
</dbReference>
<dbReference type="RefSeq" id="WP_011628945.1">
    <property type="nucleotide sequence ID" value="NC_008340.1"/>
</dbReference>
<dbReference type="SMR" id="Q0A9D7"/>
<dbReference type="KEGG" id="aeh:Mlg_1201"/>
<dbReference type="eggNOG" id="COG0139">
    <property type="taxonomic scope" value="Bacteria"/>
</dbReference>
<dbReference type="HOGENOM" id="CLU_048577_5_0_6"/>
<dbReference type="OrthoDB" id="9795769at2"/>
<dbReference type="UniPathway" id="UPA00031">
    <property type="reaction ID" value="UER00008"/>
</dbReference>
<dbReference type="Proteomes" id="UP000001962">
    <property type="component" value="Chromosome"/>
</dbReference>
<dbReference type="GO" id="GO:0005737">
    <property type="term" value="C:cytoplasm"/>
    <property type="evidence" value="ECO:0007669"/>
    <property type="project" value="UniProtKB-SubCell"/>
</dbReference>
<dbReference type="GO" id="GO:0000287">
    <property type="term" value="F:magnesium ion binding"/>
    <property type="evidence" value="ECO:0007669"/>
    <property type="project" value="UniProtKB-UniRule"/>
</dbReference>
<dbReference type="GO" id="GO:0004635">
    <property type="term" value="F:phosphoribosyl-AMP cyclohydrolase activity"/>
    <property type="evidence" value="ECO:0007669"/>
    <property type="project" value="UniProtKB-UniRule"/>
</dbReference>
<dbReference type="GO" id="GO:0008270">
    <property type="term" value="F:zinc ion binding"/>
    <property type="evidence" value="ECO:0007669"/>
    <property type="project" value="UniProtKB-UniRule"/>
</dbReference>
<dbReference type="GO" id="GO:0000105">
    <property type="term" value="P:L-histidine biosynthetic process"/>
    <property type="evidence" value="ECO:0007669"/>
    <property type="project" value="UniProtKB-UniRule"/>
</dbReference>
<dbReference type="FunFam" id="3.10.20.810:FF:000001">
    <property type="entry name" value="Histidine biosynthesis bifunctional protein HisIE"/>
    <property type="match status" value="1"/>
</dbReference>
<dbReference type="Gene3D" id="4.10.80.70">
    <property type="match status" value="1"/>
</dbReference>
<dbReference type="Gene3D" id="3.10.20.810">
    <property type="entry name" value="Phosphoribosyl-AMP cyclohydrolase"/>
    <property type="match status" value="1"/>
</dbReference>
<dbReference type="HAMAP" id="MF_01021">
    <property type="entry name" value="HisI"/>
    <property type="match status" value="1"/>
</dbReference>
<dbReference type="InterPro" id="IPR026660">
    <property type="entry name" value="PRA-CH"/>
</dbReference>
<dbReference type="InterPro" id="IPR002496">
    <property type="entry name" value="PRib_AMP_CycHydrolase_dom"/>
</dbReference>
<dbReference type="InterPro" id="IPR038019">
    <property type="entry name" value="PRib_AMP_CycHydrolase_sf"/>
</dbReference>
<dbReference type="NCBIfam" id="NF000768">
    <property type="entry name" value="PRK00051.1"/>
    <property type="match status" value="1"/>
</dbReference>
<dbReference type="PANTHER" id="PTHR42945">
    <property type="entry name" value="HISTIDINE BIOSYNTHESIS BIFUNCTIONAL PROTEIN"/>
    <property type="match status" value="1"/>
</dbReference>
<dbReference type="PANTHER" id="PTHR42945:SF1">
    <property type="entry name" value="HISTIDINE BIOSYNTHESIS BIFUNCTIONAL PROTEIN HIS7"/>
    <property type="match status" value="1"/>
</dbReference>
<dbReference type="Pfam" id="PF01502">
    <property type="entry name" value="PRA-CH"/>
    <property type="match status" value="1"/>
</dbReference>
<dbReference type="SUPFAM" id="SSF141734">
    <property type="entry name" value="HisI-like"/>
    <property type="match status" value="1"/>
</dbReference>
<reference key="1">
    <citation type="submission" date="2006-08" db="EMBL/GenBank/DDBJ databases">
        <title>Complete sequence of Alkalilimnicola ehrilichei MLHE-1.</title>
        <authorList>
            <person name="Copeland A."/>
            <person name="Lucas S."/>
            <person name="Lapidus A."/>
            <person name="Barry K."/>
            <person name="Detter J.C."/>
            <person name="Glavina del Rio T."/>
            <person name="Hammon N."/>
            <person name="Israni S."/>
            <person name="Dalin E."/>
            <person name="Tice H."/>
            <person name="Pitluck S."/>
            <person name="Sims D."/>
            <person name="Brettin T."/>
            <person name="Bruce D."/>
            <person name="Han C."/>
            <person name="Tapia R."/>
            <person name="Gilna P."/>
            <person name="Schmutz J."/>
            <person name="Larimer F."/>
            <person name="Land M."/>
            <person name="Hauser L."/>
            <person name="Kyrpides N."/>
            <person name="Mikhailova N."/>
            <person name="Oremland R.S."/>
            <person name="Hoeft S.E."/>
            <person name="Switzer-Blum J."/>
            <person name="Kulp T."/>
            <person name="King G."/>
            <person name="Tabita R."/>
            <person name="Witte B."/>
            <person name="Santini J.M."/>
            <person name="Basu P."/>
            <person name="Hollibaugh J.T."/>
            <person name="Xie G."/>
            <person name="Stolz J.F."/>
            <person name="Richardson P."/>
        </authorList>
    </citation>
    <scope>NUCLEOTIDE SEQUENCE [LARGE SCALE GENOMIC DNA]</scope>
    <source>
        <strain>ATCC BAA-1101 / DSM 17681 / MLHE-1</strain>
    </source>
</reference>
<accession>Q0A9D7</accession>
<gene>
    <name evidence="1" type="primary">hisI</name>
    <name type="ordered locus">Mlg_1201</name>
</gene>
<sequence>MFKDLEKARPGTRRDLPAVLAALPWNAQGLLPAIAQQHDSGEVLMMAWMNREALEETLRTGRVCYYSRSRRSLWRKGESSGQVQRLVELRLDCDGDTLLLRVDQTGPACHTGRRSCFYNRLDGDGLEVIAAPEIDPETLYHR</sequence>
<proteinExistence type="inferred from homology"/>
<organism>
    <name type="scientific">Alkalilimnicola ehrlichii (strain ATCC BAA-1101 / DSM 17681 / MLHE-1)</name>
    <dbReference type="NCBI Taxonomy" id="187272"/>
    <lineage>
        <taxon>Bacteria</taxon>
        <taxon>Pseudomonadati</taxon>
        <taxon>Pseudomonadota</taxon>
        <taxon>Gammaproteobacteria</taxon>
        <taxon>Chromatiales</taxon>
        <taxon>Ectothiorhodospiraceae</taxon>
        <taxon>Alkalilimnicola</taxon>
    </lineage>
</organism>
<feature type="chain" id="PRO_0000319681" description="Phosphoribosyl-AMP cyclohydrolase">
    <location>
        <begin position="1"/>
        <end position="142"/>
    </location>
</feature>
<feature type="binding site" evidence="1">
    <location>
        <position position="92"/>
    </location>
    <ligand>
        <name>Mg(2+)</name>
        <dbReference type="ChEBI" id="CHEBI:18420"/>
    </ligand>
</feature>
<feature type="binding site" evidence="1">
    <location>
        <position position="93"/>
    </location>
    <ligand>
        <name>Zn(2+)</name>
        <dbReference type="ChEBI" id="CHEBI:29105"/>
        <note>ligand shared between dimeric partners</note>
    </ligand>
</feature>
<feature type="binding site" evidence="1">
    <location>
        <position position="94"/>
    </location>
    <ligand>
        <name>Mg(2+)</name>
        <dbReference type="ChEBI" id="CHEBI:18420"/>
    </ligand>
</feature>
<feature type="binding site" evidence="1">
    <location>
        <position position="96"/>
    </location>
    <ligand>
        <name>Mg(2+)</name>
        <dbReference type="ChEBI" id="CHEBI:18420"/>
    </ligand>
</feature>
<feature type="binding site" evidence="1">
    <location>
        <position position="109"/>
    </location>
    <ligand>
        <name>Zn(2+)</name>
        <dbReference type="ChEBI" id="CHEBI:29105"/>
        <note>ligand shared between dimeric partners</note>
    </ligand>
</feature>
<feature type="binding site" evidence="1">
    <location>
        <position position="116"/>
    </location>
    <ligand>
        <name>Zn(2+)</name>
        <dbReference type="ChEBI" id="CHEBI:29105"/>
        <note>ligand shared between dimeric partners</note>
    </ligand>
</feature>